<organism>
    <name type="scientific">Salmonella dublin (strain CT_02021853)</name>
    <dbReference type="NCBI Taxonomy" id="439851"/>
    <lineage>
        <taxon>Bacteria</taxon>
        <taxon>Pseudomonadati</taxon>
        <taxon>Pseudomonadota</taxon>
        <taxon>Gammaproteobacteria</taxon>
        <taxon>Enterobacterales</taxon>
        <taxon>Enterobacteriaceae</taxon>
        <taxon>Salmonella</taxon>
    </lineage>
</organism>
<keyword id="KW-0067">ATP-binding</keyword>
<keyword id="KW-0963">Cytoplasm</keyword>
<keyword id="KW-0418">Kinase</keyword>
<keyword id="KW-0520">NAD</keyword>
<keyword id="KW-0521">NADP</keyword>
<keyword id="KW-0547">Nucleotide-binding</keyword>
<keyword id="KW-0808">Transferase</keyword>
<gene>
    <name evidence="1" type="primary">nadK</name>
    <name type="ordered locus">SeD_A3009</name>
</gene>
<evidence type="ECO:0000255" key="1">
    <source>
        <dbReference type="HAMAP-Rule" id="MF_00361"/>
    </source>
</evidence>
<name>NADK_SALDC</name>
<protein>
    <recommendedName>
        <fullName evidence="1">NAD kinase</fullName>
        <ecNumber evidence="1">2.7.1.23</ecNumber>
    </recommendedName>
    <alternativeName>
        <fullName evidence="1">ATP-dependent NAD kinase</fullName>
    </alternativeName>
</protein>
<comment type="function">
    <text evidence="1">Involved in the regulation of the intracellular balance of NAD and NADP, and is a key enzyme in the biosynthesis of NADP. Catalyzes specifically the phosphorylation on 2'-hydroxyl of the adenosine moiety of NAD to yield NADP.</text>
</comment>
<comment type="catalytic activity">
    <reaction evidence="1">
        <text>NAD(+) + ATP = ADP + NADP(+) + H(+)</text>
        <dbReference type="Rhea" id="RHEA:18629"/>
        <dbReference type="ChEBI" id="CHEBI:15378"/>
        <dbReference type="ChEBI" id="CHEBI:30616"/>
        <dbReference type="ChEBI" id="CHEBI:57540"/>
        <dbReference type="ChEBI" id="CHEBI:58349"/>
        <dbReference type="ChEBI" id="CHEBI:456216"/>
        <dbReference type="EC" id="2.7.1.23"/>
    </reaction>
</comment>
<comment type="cofactor">
    <cofactor evidence="1">
        <name>a divalent metal cation</name>
        <dbReference type="ChEBI" id="CHEBI:60240"/>
    </cofactor>
</comment>
<comment type="subcellular location">
    <subcellularLocation>
        <location evidence="1">Cytoplasm</location>
    </subcellularLocation>
</comment>
<comment type="similarity">
    <text evidence="1">Belongs to the NAD kinase family.</text>
</comment>
<sequence>MNNHFKCIGIVGHPRHPTALTTHEMLYRWLCAQGYEVIVEQQIAHELQLKNVPTGTLAEIGQQADLAVVVGGDGNMLGAARTLARYNINVIGINRGNLGFLTDLDPDNALQQLSDVLEGRYISEKRFLLEAQVCQQDRQKRISTAINEVVLHPGKVAHMIEFEVYIDETFAFSQRSDGLIISTPTGSTAYSLSAGGPILTPSLDAITLVPMFPHTLSARPLVINSSSTIRLRFSHRRSDLEISCDSQIALPIQEGEDVLIRRCDYHLNLIHPKDYSYFNTLSTKLGWSKKLF</sequence>
<accession>B5FS14</accession>
<proteinExistence type="inferred from homology"/>
<reference key="1">
    <citation type="journal article" date="2011" name="J. Bacteriol.">
        <title>Comparative genomics of 28 Salmonella enterica isolates: evidence for CRISPR-mediated adaptive sublineage evolution.</title>
        <authorList>
            <person name="Fricke W.F."/>
            <person name="Mammel M.K."/>
            <person name="McDermott P.F."/>
            <person name="Tartera C."/>
            <person name="White D.G."/>
            <person name="Leclerc J.E."/>
            <person name="Ravel J."/>
            <person name="Cebula T.A."/>
        </authorList>
    </citation>
    <scope>NUCLEOTIDE SEQUENCE [LARGE SCALE GENOMIC DNA]</scope>
    <source>
        <strain>CT_02021853</strain>
    </source>
</reference>
<dbReference type="EC" id="2.7.1.23" evidence="1"/>
<dbReference type="EMBL" id="CP001144">
    <property type="protein sequence ID" value="ACH74188.1"/>
    <property type="molecule type" value="Genomic_DNA"/>
</dbReference>
<dbReference type="RefSeq" id="WP_001059151.1">
    <property type="nucleotide sequence ID" value="NC_011205.1"/>
</dbReference>
<dbReference type="SMR" id="B5FS14"/>
<dbReference type="KEGG" id="sed:SeD_A3009"/>
<dbReference type="HOGENOM" id="CLU_008831_0_1_6"/>
<dbReference type="Proteomes" id="UP000008322">
    <property type="component" value="Chromosome"/>
</dbReference>
<dbReference type="GO" id="GO:0005737">
    <property type="term" value="C:cytoplasm"/>
    <property type="evidence" value="ECO:0007669"/>
    <property type="project" value="UniProtKB-SubCell"/>
</dbReference>
<dbReference type="GO" id="GO:0005524">
    <property type="term" value="F:ATP binding"/>
    <property type="evidence" value="ECO:0007669"/>
    <property type="project" value="UniProtKB-KW"/>
</dbReference>
<dbReference type="GO" id="GO:0046872">
    <property type="term" value="F:metal ion binding"/>
    <property type="evidence" value="ECO:0007669"/>
    <property type="project" value="UniProtKB-UniRule"/>
</dbReference>
<dbReference type="GO" id="GO:0051287">
    <property type="term" value="F:NAD binding"/>
    <property type="evidence" value="ECO:0007669"/>
    <property type="project" value="UniProtKB-ARBA"/>
</dbReference>
<dbReference type="GO" id="GO:0003951">
    <property type="term" value="F:NAD+ kinase activity"/>
    <property type="evidence" value="ECO:0007669"/>
    <property type="project" value="UniProtKB-UniRule"/>
</dbReference>
<dbReference type="GO" id="GO:0019674">
    <property type="term" value="P:NAD metabolic process"/>
    <property type="evidence" value="ECO:0007669"/>
    <property type="project" value="InterPro"/>
</dbReference>
<dbReference type="GO" id="GO:0006741">
    <property type="term" value="P:NADP biosynthetic process"/>
    <property type="evidence" value="ECO:0007669"/>
    <property type="project" value="UniProtKB-UniRule"/>
</dbReference>
<dbReference type="FunFam" id="2.60.200.30:FF:000001">
    <property type="entry name" value="NAD kinase"/>
    <property type="match status" value="1"/>
</dbReference>
<dbReference type="FunFam" id="3.40.50.10330:FF:000004">
    <property type="entry name" value="NAD kinase"/>
    <property type="match status" value="1"/>
</dbReference>
<dbReference type="Gene3D" id="3.40.50.10330">
    <property type="entry name" value="Probable inorganic polyphosphate/atp-NAD kinase, domain 1"/>
    <property type="match status" value="1"/>
</dbReference>
<dbReference type="Gene3D" id="2.60.200.30">
    <property type="entry name" value="Probable inorganic polyphosphate/atp-NAD kinase, domain 2"/>
    <property type="match status" value="1"/>
</dbReference>
<dbReference type="HAMAP" id="MF_00361">
    <property type="entry name" value="NAD_kinase"/>
    <property type="match status" value="1"/>
</dbReference>
<dbReference type="InterPro" id="IPR017438">
    <property type="entry name" value="ATP-NAD_kinase_N"/>
</dbReference>
<dbReference type="InterPro" id="IPR017437">
    <property type="entry name" value="ATP-NAD_kinase_PpnK-typ_C"/>
</dbReference>
<dbReference type="InterPro" id="IPR016064">
    <property type="entry name" value="NAD/diacylglycerol_kinase_sf"/>
</dbReference>
<dbReference type="InterPro" id="IPR002504">
    <property type="entry name" value="NADK"/>
</dbReference>
<dbReference type="NCBIfam" id="NF002306">
    <property type="entry name" value="PRK01231.1"/>
    <property type="match status" value="1"/>
</dbReference>
<dbReference type="NCBIfam" id="NF002893">
    <property type="entry name" value="PRK03378.1"/>
    <property type="match status" value="1"/>
</dbReference>
<dbReference type="PANTHER" id="PTHR20275">
    <property type="entry name" value="NAD KINASE"/>
    <property type="match status" value="1"/>
</dbReference>
<dbReference type="PANTHER" id="PTHR20275:SF0">
    <property type="entry name" value="NAD KINASE"/>
    <property type="match status" value="1"/>
</dbReference>
<dbReference type="Pfam" id="PF01513">
    <property type="entry name" value="NAD_kinase"/>
    <property type="match status" value="1"/>
</dbReference>
<dbReference type="Pfam" id="PF20143">
    <property type="entry name" value="NAD_kinase_C"/>
    <property type="match status" value="1"/>
</dbReference>
<dbReference type="SUPFAM" id="SSF111331">
    <property type="entry name" value="NAD kinase/diacylglycerol kinase-like"/>
    <property type="match status" value="1"/>
</dbReference>
<feature type="chain" id="PRO_1000120881" description="NAD kinase">
    <location>
        <begin position="1"/>
        <end position="292"/>
    </location>
</feature>
<feature type="active site" description="Proton acceptor" evidence="1">
    <location>
        <position position="73"/>
    </location>
</feature>
<feature type="binding site" evidence="1">
    <location>
        <begin position="73"/>
        <end position="74"/>
    </location>
    <ligand>
        <name>NAD(+)</name>
        <dbReference type="ChEBI" id="CHEBI:57540"/>
    </ligand>
</feature>
<feature type="binding site" evidence="1">
    <location>
        <begin position="147"/>
        <end position="148"/>
    </location>
    <ligand>
        <name>NAD(+)</name>
        <dbReference type="ChEBI" id="CHEBI:57540"/>
    </ligand>
</feature>
<feature type="binding site" evidence="1">
    <location>
        <position position="158"/>
    </location>
    <ligand>
        <name>NAD(+)</name>
        <dbReference type="ChEBI" id="CHEBI:57540"/>
    </ligand>
</feature>
<feature type="binding site" evidence="1">
    <location>
        <position position="175"/>
    </location>
    <ligand>
        <name>NAD(+)</name>
        <dbReference type="ChEBI" id="CHEBI:57540"/>
    </ligand>
</feature>
<feature type="binding site" evidence="1">
    <location>
        <position position="177"/>
    </location>
    <ligand>
        <name>NAD(+)</name>
        <dbReference type="ChEBI" id="CHEBI:57540"/>
    </ligand>
</feature>
<feature type="binding site" evidence="1">
    <location>
        <begin position="188"/>
        <end position="193"/>
    </location>
    <ligand>
        <name>NAD(+)</name>
        <dbReference type="ChEBI" id="CHEBI:57540"/>
    </ligand>
</feature>
<feature type="binding site" evidence="1">
    <location>
        <position position="247"/>
    </location>
    <ligand>
        <name>NAD(+)</name>
        <dbReference type="ChEBI" id="CHEBI:57540"/>
    </ligand>
</feature>